<protein>
    <recommendedName>
        <fullName evidence="1">DNA primase</fullName>
        <ecNumber evidence="1">2.7.7.101</ecNumber>
    </recommendedName>
</protein>
<organism>
    <name type="scientific">Borreliella burgdorferi (strain ATCC 35210 / DSM 4680 / CIP 102532 / B31)</name>
    <name type="common">Borrelia burgdorferi</name>
    <dbReference type="NCBI Taxonomy" id="224326"/>
    <lineage>
        <taxon>Bacteria</taxon>
        <taxon>Pseudomonadati</taxon>
        <taxon>Spirochaetota</taxon>
        <taxon>Spirochaetia</taxon>
        <taxon>Spirochaetales</taxon>
        <taxon>Borreliaceae</taxon>
        <taxon>Borreliella</taxon>
    </lineage>
</organism>
<name>DNAG_BORBU</name>
<dbReference type="EC" id="2.7.7.101" evidence="1"/>
<dbReference type="EMBL" id="AE000783">
    <property type="status" value="NOT_ANNOTATED_CDS"/>
    <property type="molecule type" value="Genomic_DNA"/>
</dbReference>
<dbReference type="PIR" id="E70188">
    <property type="entry name" value="E70188"/>
</dbReference>
<dbReference type="SMR" id="O51653"/>
<dbReference type="Proteomes" id="UP000001807">
    <property type="component" value="Chromosome"/>
</dbReference>
<dbReference type="GO" id="GO:0005737">
    <property type="term" value="C:cytoplasm"/>
    <property type="evidence" value="ECO:0007669"/>
    <property type="project" value="TreeGrafter"/>
</dbReference>
<dbReference type="GO" id="GO:0000428">
    <property type="term" value="C:DNA-directed RNA polymerase complex"/>
    <property type="evidence" value="ECO:0007669"/>
    <property type="project" value="UniProtKB-KW"/>
</dbReference>
<dbReference type="GO" id="GO:1990077">
    <property type="term" value="C:primosome complex"/>
    <property type="evidence" value="ECO:0007669"/>
    <property type="project" value="UniProtKB-KW"/>
</dbReference>
<dbReference type="GO" id="GO:0003677">
    <property type="term" value="F:DNA binding"/>
    <property type="evidence" value="ECO:0007669"/>
    <property type="project" value="UniProtKB-KW"/>
</dbReference>
<dbReference type="GO" id="GO:0003899">
    <property type="term" value="F:DNA-directed RNA polymerase activity"/>
    <property type="evidence" value="ECO:0007669"/>
    <property type="project" value="InterPro"/>
</dbReference>
<dbReference type="GO" id="GO:0008270">
    <property type="term" value="F:zinc ion binding"/>
    <property type="evidence" value="ECO:0007669"/>
    <property type="project" value="UniProtKB-UniRule"/>
</dbReference>
<dbReference type="GO" id="GO:0006269">
    <property type="term" value="P:DNA replication, synthesis of primer"/>
    <property type="evidence" value="ECO:0007669"/>
    <property type="project" value="UniProtKB-UniRule"/>
</dbReference>
<dbReference type="CDD" id="cd03364">
    <property type="entry name" value="TOPRIM_DnaG_primases"/>
    <property type="match status" value="1"/>
</dbReference>
<dbReference type="FunFam" id="3.90.580.10:FF:000001">
    <property type="entry name" value="DNA primase"/>
    <property type="match status" value="1"/>
</dbReference>
<dbReference type="Gene3D" id="3.40.1360.10">
    <property type="match status" value="1"/>
</dbReference>
<dbReference type="Gene3D" id="3.90.980.10">
    <property type="entry name" value="DNA primase, catalytic core, N-terminal domain"/>
    <property type="match status" value="1"/>
</dbReference>
<dbReference type="Gene3D" id="3.90.580.10">
    <property type="entry name" value="Zinc finger, CHC2-type domain"/>
    <property type="match status" value="1"/>
</dbReference>
<dbReference type="HAMAP" id="MF_00974">
    <property type="entry name" value="DNA_primase_DnaG"/>
    <property type="match status" value="1"/>
</dbReference>
<dbReference type="InterPro" id="IPR037068">
    <property type="entry name" value="DNA_primase_core_N_sf"/>
</dbReference>
<dbReference type="InterPro" id="IPR006295">
    <property type="entry name" value="DNA_primase_DnaG"/>
</dbReference>
<dbReference type="InterPro" id="IPR036977">
    <property type="entry name" value="DNA_primase_Znf_CHC2"/>
</dbReference>
<dbReference type="InterPro" id="IPR030846">
    <property type="entry name" value="DnaG_bac"/>
</dbReference>
<dbReference type="InterPro" id="IPR013264">
    <property type="entry name" value="DNAG_N"/>
</dbReference>
<dbReference type="InterPro" id="IPR050219">
    <property type="entry name" value="DnaG_primase"/>
</dbReference>
<dbReference type="InterPro" id="IPR034151">
    <property type="entry name" value="TOPRIM_DnaG_bac"/>
</dbReference>
<dbReference type="InterPro" id="IPR006171">
    <property type="entry name" value="TOPRIM_dom"/>
</dbReference>
<dbReference type="InterPro" id="IPR002694">
    <property type="entry name" value="Znf_CHC2"/>
</dbReference>
<dbReference type="NCBIfam" id="TIGR01391">
    <property type="entry name" value="dnaG"/>
    <property type="match status" value="1"/>
</dbReference>
<dbReference type="PANTHER" id="PTHR30313">
    <property type="entry name" value="DNA PRIMASE"/>
    <property type="match status" value="1"/>
</dbReference>
<dbReference type="PANTHER" id="PTHR30313:SF2">
    <property type="entry name" value="DNA PRIMASE"/>
    <property type="match status" value="1"/>
</dbReference>
<dbReference type="Pfam" id="PF08275">
    <property type="entry name" value="DNAG_N"/>
    <property type="match status" value="1"/>
</dbReference>
<dbReference type="Pfam" id="PF13155">
    <property type="entry name" value="Toprim_2"/>
    <property type="match status" value="1"/>
</dbReference>
<dbReference type="Pfam" id="PF01807">
    <property type="entry name" value="Zn_ribbon_DnaG"/>
    <property type="match status" value="1"/>
</dbReference>
<dbReference type="PIRSF" id="PIRSF002811">
    <property type="entry name" value="DnaG"/>
    <property type="match status" value="1"/>
</dbReference>
<dbReference type="SMART" id="SM00493">
    <property type="entry name" value="TOPRIM"/>
    <property type="match status" value="1"/>
</dbReference>
<dbReference type="SMART" id="SM00400">
    <property type="entry name" value="ZnF_CHCC"/>
    <property type="match status" value="1"/>
</dbReference>
<dbReference type="SUPFAM" id="SSF56731">
    <property type="entry name" value="DNA primase core"/>
    <property type="match status" value="1"/>
</dbReference>
<dbReference type="SUPFAM" id="SSF57783">
    <property type="entry name" value="Zinc beta-ribbon"/>
    <property type="match status" value="1"/>
</dbReference>
<dbReference type="PROSITE" id="PS50880">
    <property type="entry name" value="TOPRIM"/>
    <property type="match status" value="1"/>
</dbReference>
<accession>O51653</accession>
<reference key="1">
    <citation type="journal article" date="1997" name="Nature">
        <title>Genomic sequence of a Lyme disease spirochaete, Borrelia burgdorferi.</title>
        <authorList>
            <person name="Fraser C.M."/>
            <person name="Casjens S."/>
            <person name="Huang W.M."/>
            <person name="Sutton G.G."/>
            <person name="Clayton R.A."/>
            <person name="Lathigra R."/>
            <person name="White O."/>
            <person name="Ketchum K.A."/>
            <person name="Dodson R.J."/>
            <person name="Hickey E.K."/>
            <person name="Gwinn M.L."/>
            <person name="Dougherty B.A."/>
            <person name="Tomb J.-F."/>
            <person name="Fleischmann R.D."/>
            <person name="Richardson D.L."/>
            <person name="Peterson J.D."/>
            <person name="Kerlavage A.R."/>
            <person name="Quackenbush J."/>
            <person name="Salzberg S.L."/>
            <person name="Hanson M."/>
            <person name="van Vugt R."/>
            <person name="Palmer N."/>
            <person name="Adams M.D."/>
            <person name="Gocayne J.D."/>
            <person name="Weidman J.F."/>
            <person name="Utterback T.R."/>
            <person name="Watthey L."/>
            <person name="McDonald L.A."/>
            <person name="Artiach P."/>
            <person name="Bowman C."/>
            <person name="Garland S.A."/>
            <person name="Fujii C."/>
            <person name="Cotton M.D."/>
            <person name="Horst K."/>
            <person name="Roberts K.M."/>
            <person name="Hatch B."/>
            <person name="Smith H.O."/>
            <person name="Venter J.C."/>
        </authorList>
    </citation>
    <scope>NUCLEOTIDE SEQUENCE [LARGE SCALE GENOMIC DNA]</scope>
    <source>
        <strain>ATCC 35210 / DSM 4680 / CIP 102532 / B31</strain>
    </source>
</reference>
<proteinExistence type="inferred from homology"/>
<evidence type="ECO:0000255" key="1">
    <source>
        <dbReference type="HAMAP-Rule" id="MF_00974"/>
    </source>
</evidence>
<comment type="function">
    <text evidence="1">RNA polymerase that catalyzes the synthesis of short RNA molecules used as primers for DNA polymerase during DNA replication.</text>
</comment>
<comment type="catalytic activity">
    <reaction evidence="1">
        <text>ssDNA + n NTP = ssDNA/pppN(pN)n-1 hybrid + (n-1) diphosphate.</text>
        <dbReference type="EC" id="2.7.7.101"/>
    </reaction>
</comment>
<comment type="cofactor">
    <cofactor evidence="1">
        <name>Zn(2+)</name>
        <dbReference type="ChEBI" id="CHEBI:29105"/>
    </cofactor>
    <text evidence="1">Binds 1 zinc ion per monomer.</text>
</comment>
<comment type="cofactor">
    <cofactor evidence="1">
        <name>Mg(2+)</name>
        <dbReference type="ChEBI" id="CHEBI:18420"/>
    </cofactor>
    <text evidence="1">Binds two Mg(2+) per subunit.</text>
</comment>
<comment type="subunit">
    <text evidence="1">Monomer. Interacts with DnaB.</text>
</comment>
<comment type="domain">
    <text evidence="1">Contains an N-terminal zinc-binding domain, a central core domain that contains the primase activity, and a C-terminal DnaB-binding domain.</text>
</comment>
<comment type="similarity">
    <text evidence="1">Belongs to the DnaG primase family.</text>
</comment>
<sequence>MKYLQTVASMKSKFDIVAIVEQYIKLVKSGSAYKGLCPFHAEKTPSFFVNPLQGYFYCFGCKKGGDVIGFLMDMEKINYNDALKILCEKSGIHYDDLKISRGSENKNENKDMVSKIYSLNSRLINTIKFFLSKNKKALDYVLKSRAISKEIVDLFELGYLPFNFKNGLELHDFLVSKGYSSEVLRKSGLFSKTNPKVSILFQRLIFPIKDFKGNVVGFGGRDLDGKGSKYINLGETEVFKKRELLYGFYEGFEEIKSTKSVILVEGYIDVLAFFTSGIKRAVSTLGTAFSKEHLALIQRYADEIIFSFDGDDAGLSATLKAYQICLPFNINVSVVRMDFGTDPADVLKSEGVDSLQKILNNRCDAFEYLLDVYSNKYNLNKTVDLNAMINLFLNLINLSKVDTQKKIFLDKLSNKLGIGVTTLLKDYYRIKERFVVDNNKRNLYAHNDDSYERYLIVALLKNFSYFSIVRRNIIDSDLINVDARKVFMCFENLFENNKDFSLMDLKKNLKDTYKVSEFFLKKF</sequence>
<keyword id="KW-0235">DNA replication</keyword>
<keyword id="KW-0238">DNA-binding</keyword>
<keyword id="KW-0240">DNA-directed RNA polymerase</keyword>
<keyword id="KW-0460">Magnesium</keyword>
<keyword id="KW-0479">Metal-binding</keyword>
<keyword id="KW-0548">Nucleotidyltransferase</keyword>
<keyword id="KW-0639">Primosome</keyword>
<keyword id="KW-1185">Reference proteome</keyword>
<keyword id="KW-0804">Transcription</keyword>
<keyword id="KW-0808">Transferase</keyword>
<keyword id="KW-0862">Zinc</keyword>
<keyword id="KW-0863">Zinc-finger</keyword>
<feature type="chain" id="PRO_0000180480" description="DNA primase">
    <location>
        <begin position="1"/>
        <end position="523"/>
    </location>
</feature>
<feature type="domain" description="Toprim" evidence="1">
    <location>
        <begin position="259"/>
        <end position="340"/>
    </location>
</feature>
<feature type="zinc finger region" description="CHC2-type" evidence="1">
    <location>
        <begin position="37"/>
        <end position="61"/>
    </location>
</feature>
<feature type="binding site" evidence="1">
    <location>
        <position position="265"/>
    </location>
    <ligand>
        <name>Mg(2+)</name>
        <dbReference type="ChEBI" id="CHEBI:18420"/>
        <label>1</label>
        <note>catalytic</note>
    </ligand>
</feature>
<feature type="binding site" evidence="1">
    <location>
        <position position="309"/>
    </location>
    <ligand>
        <name>Mg(2+)</name>
        <dbReference type="ChEBI" id="CHEBI:18420"/>
        <label>1</label>
        <note>catalytic</note>
    </ligand>
</feature>
<feature type="binding site" evidence="1">
    <location>
        <position position="309"/>
    </location>
    <ligand>
        <name>Mg(2+)</name>
        <dbReference type="ChEBI" id="CHEBI:18420"/>
        <label>2</label>
    </ligand>
</feature>
<feature type="binding site" evidence="1">
    <location>
        <position position="311"/>
    </location>
    <ligand>
        <name>Mg(2+)</name>
        <dbReference type="ChEBI" id="CHEBI:18420"/>
        <label>2</label>
    </ligand>
</feature>
<gene>
    <name evidence="1" type="primary">dnaG</name>
    <name type="ordered locus">BB_0710</name>
</gene>